<protein>
    <recommendedName>
        <fullName>Interleukin-36 receptor antagonist protein</fullName>
        <shortName evidence="10">IL-36Ra</shortName>
    </recommendedName>
    <alternativeName>
        <fullName>FIL1 delta</fullName>
    </alternativeName>
    <alternativeName>
        <fullName>IL-1-related protein 3</fullName>
        <shortName>IL-1RP3</shortName>
    </alternativeName>
    <alternativeName>
        <fullName>Interleukin-1 HY1</fullName>
        <shortName>IL-1HY1</shortName>
    </alternativeName>
    <alternativeName>
        <fullName>Interleukin-1 delta</fullName>
        <shortName>IL-1 delta</shortName>
    </alternativeName>
    <alternativeName>
        <fullName>Interleukin-1 family member 5</fullName>
        <shortName>IL-1F5</shortName>
    </alternativeName>
    <alternativeName>
        <fullName>Interleukin-1 receptor antagonist homolog 1</fullName>
        <shortName>IL-1ra homolog 1</shortName>
    </alternativeName>
    <alternativeName>
        <fullName>Interleukin-1-like protein 1</fullName>
        <shortName>IL-1L1</shortName>
    </alternativeName>
</protein>
<sequence length="155" mass="16962">MVLSGALCFRMKDSALKVLYLHNNQLLAGGLHAGKVIKGEEISVVPNRWLDASLSPVILGVQGGSQCLSCGVGQEPTLTLEPVNIMELYLGAKESKSFTFYRRDMGLTSSFESAAYPGWFLCTVPEADQPVRLTQLPENGGWNAPITDFYFQQCD</sequence>
<dbReference type="EMBL" id="AF201830">
    <property type="protein sequence ID" value="AAF25210.1"/>
    <property type="molecule type" value="mRNA"/>
</dbReference>
<dbReference type="EMBL" id="AF186094">
    <property type="protein sequence ID" value="AAF02757.1"/>
    <property type="molecule type" value="mRNA"/>
</dbReference>
<dbReference type="EMBL" id="AJ242737">
    <property type="protein sequence ID" value="CAB59822.1"/>
    <property type="molecule type" value="mRNA"/>
</dbReference>
<dbReference type="EMBL" id="AJ242738">
    <property type="protein sequence ID" value="CAB59823.1"/>
    <property type="molecule type" value="mRNA"/>
</dbReference>
<dbReference type="EMBL" id="AJ271338">
    <property type="protein sequence ID" value="CAB67704.1"/>
    <property type="molecule type" value="Genomic_DNA"/>
</dbReference>
<dbReference type="EMBL" id="AF216693">
    <property type="protein sequence ID" value="AAF76981.1"/>
    <property type="molecule type" value="Genomic_DNA"/>
</dbReference>
<dbReference type="EMBL" id="AF230377">
    <property type="protein sequence ID" value="AAF91274.1"/>
    <property type="molecule type" value="mRNA"/>
</dbReference>
<dbReference type="EMBL" id="BN000002">
    <property type="protein sequence ID" value="CAD29877.1"/>
    <property type="molecule type" value="Genomic_DNA"/>
</dbReference>
<dbReference type="EMBL" id="AY359117">
    <property type="protein sequence ID" value="AAQ89475.1"/>
    <property type="molecule type" value="mRNA"/>
</dbReference>
<dbReference type="EMBL" id="AK290249">
    <property type="protein sequence ID" value="BAF82938.1"/>
    <property type="molecule type" value="mRNA"/>
</dbReference>
<dbReference type="EMBL" id="AY972853">
    <property type="protein sequence ID" value="AAX59031.1"/>
    <property type="molecule type" value="Genomic_DNA"/>
</dbReference>
<dbReference type="EMBL" id="AC016724">
    <property type="protein sequence ID" value="AAY14990.1"/>
    <property type="molecule type" value="Genomic_DNA"/>
</dbReference>
<dbReference type="EMBL" id="CH471217">
    <property type="protein sequence ID" value="EAW73617.1"/>
    <property type="molecule type" value="Genomic_DNA"/>
</dbReference>
<dbReference type="EMBL" id="BC024747">
    <property type="protein sequence ID" value="AAH24747.1"/>
    <property type="molecule type" value="mRNA"/>
</dbReference>
<dbReference type="CCDS" id="CCDS2111.1"/>
<dbReference type="PIR" id="JC7104">
    <property type="entry name" value="JC7104"/>
</dbReference>
<dbReference type="RefSeq" id="NP_036407.1">
    <property type="nucleotide sequence ID" value="NM_012275.3"/>
</dbReference>
<dbReference type="RefSeq" id="NP_775262.1">
    <property type="nucleotide sequence ID" value="NM_173170.1"/>
</dbReference>
<dbReference type="RefSeq" id="XP_047299874.1">
    <property type="nucleotide sequence ID" value="XM_047443918.1"/>
</dbReference>
<dbReference type="RefSeq" id="XP_054197350.1">
    <property type="nucleotide sequence ID" value="XM_054341375.1"/>
</dbReference>
<dbReference type="PDB" id="4P0J">
    <property type="method" value="X-ray"/>
    <property type="resolution" value="2.30 A"/>
    <property type="chains" value="A/B=2-135, A/B=147-155"/>
</dbReference>
<dbReference type="PDB" id="4P0K">
    <property type="method" value="X-ray"/>
    <property type="resolution" value="1.70 A"/>
    <property type="chains" value="A=2-49, A=55-135, A=147-155"/>
</dbReference>
<dbReference type="PDB" id="4P0L">
    <property type="method" value="X-ray"/>
    <property type="resolution" value="1.55 A"/>
    <property type="chains" value="A=2-49, A=55-135, A=147-155"/>
</dbReference>
<dbReference type="PDBsum" id="4P0J"/>
<dbReference type="PDBsum" id="4P0K"/>
<dbReference type="PDBsum" id="4P0L"/>
<dbReference type="SMR" id="Q9UBH0"/>
<dbReference type="BioGRID" id="117728">
    <property type="interactions" value="54"/>
</dbReference>
<dbReference type="ComplexPortal" id="CPX-10343">
    <property type="entry name" value="Interleukin-36 antagonist complex"/>
</dbReference>
<dbReference type="CORUM" id="Q9UBH0"/>
<dbReference type="FunCoup" id="Q9UBH0">
    <property type="interactions" value="420"/>
</dbReference>
<dbReference type="IntAct" id="Q9UBH0">
    <property type="interactions" value="45"/>
</dbReference>
<dbReference type="MINT" id="Q9UBH0"/>
<dbReference type="STRING" id="9606.ENSP00000259212"/>
<dbReference type="iPTMnet" id="Q9UBH0"/>
<dbReference type="PhosphoSitePlus" id="Q9UBH0"/>
<dbReference type="BioMuta" id="IL36RN"/>
<dbReference type="DMDM" id="25008600"/>
<dbReference type="MassIVE" id="Q9UBH0"/>
<dbReference type="PaxDb" id="9606-ENSP00000376896"/>
<dbReference type="PeptideAtlas" id="Q9UBH0"/>
<dbReference type="ProteomicsDB" id="83968"/>
<dbReference type="Antibodypedia" id="35211">
    <property type="antibodies" value="287 antibodies from 32 providers"/>
</dbReference>
<dbReference type="DNASU" id="26525"/>
<dbReference type="Ensembl" id="ENST00000346807.7">
    <property type="protein sequence ID" value="ENSP00000259212.3"/>
    <property type="gene ID" value="ENSG00000136695.15"/>
</dbReference>
<dbReference type="Ensembl" id="ENST00000393200.7">
    <property type="protein sequence ID" value="ENSP00000376896.2"/>
    <property type="gene ID" value="ENSG00000136695.15"/>
</dbReference>
<dbReference type="Ensembl" id="ENST00000437409.2">
    <property type="protein sequence ID" value="ENSP00000409262.2"/>
    <property type="gene ID" value="ENSG00000136695.15"/>
</dbReference>
<dbReference type="GeneID" id="26525"/>
<dbReference type="KEGG" id="hsa:26525"/>
<dbReference type="MANE-Select" id="ENST00000393200.7">
    <property type="protein sequence ID" value="ENSP00000376896.2"/>
    <property type="RefSeq nucleotide sequence ID" value="NM_012275.3"/>
    <property type="RefSeq protein sequence ID" value="NP_036407.1"/>
</dbReference>
<dbReference type="UCSC" id="uc002tis.4">
    <property type="organism name" value="human"/>
</dbReference>
<dbReference type="AGR" id="HGNC:15561"/>
<dbReference type="CTD" id="26525"/>
<dbReference type="DisGeNET" id="26525"/>
<dbReference type="GeneCards" id="IL36RN"/>
<dbReference type="HGNC" id="HGNC:15561">
    <property type="gene designation" value="IL36RN"/>
</dbReference>
<dbReference type="HPA" id="ENSG00000136695">
    <property type="expression patterns" value="Group enriched (esophagus, lymphoid tissue, skin)"/>
</dbReference>
<dbReference type="MalaCards" id="IL36RN"/>
<dbReference type="MIM" id="605507">
    <property type="type" value="gene"/>
</dbReference>
<dbReference type="MIM" id="614204">
    <property type="type" value="phenotype"/>
</dbReference>
<dbReference type="neXtProt" id="NX_Q9UBH0"/>
<dbReference type="OpenTargets" id="ENSG00000136695"/>
<dbReference type="Orphanet" id="163931">
    <property type="disease" value="Acrodermatitis continua of Hallopeau"/>
</dbReference>
<dbReference type="Orphanet" id="404546">
    <property type="disease" value="DITRA"/>
</dbReference>
<dbReference type="Orphanet" id="247353">
    <property type="disease" value="Generalized pustular psoriasis"/>
</dbReference>
<dbReference type="Orphanet" id="163927">
    <property type="disease" value="Pustulosis palmaris et plantaris"/>
</dbReference>
<dbReference type="PharmGKB" id="PA38388"/>
<dbReference type="VEuPathDB" id="HostDB:ENSG00000136695"/>
<dbReference type="eggNOG" id="ENOG502SRSC">
    <property type="taxonomic scope" value="Eukaryota"/>
</dbReference>
<dbReference type="GeneTree" id="ENSGT00950000182943"/>
<dbReference type="HOGENOM" id="CLU_095373_2_1_1"/>
<dbReference type="InParanoid" id="Q9UBH0"/>
<dbReference type="OMA" id="IMELYAG"/>
<dbReference type="OrthoDB" id="9442925at2759"/>
<dbReference type="PAN-GO" id="Q9UBH0">
    <property type="GO annotations" value="3 GO annotations based on evolutionary models"/>
</dbReference>
<dbReference type="PhylomeDB" id="Q9UBH0"/>
<dbReference type="TreeFam" id="TF300203"/>
<dbReference type="PathwayCommons" id="Q9UBH0"/>
<dbReference type="Reactome" id="R-HSA-9014826">
    <property type="pathway name" value="Interleukin-36 pathway"/>
</dbReference>
<dbReference type="SignaLink" id="Q9UBH0"/>
<dbReference type="BioGRID-ORCS" id="26525">
    <property type="hits" value="14 hits in 1142 CRISPR screens"/>
</dbReference>
<dbReference type="ChiTaRS" id="IL36RN">
    <property type="organism name" value="human"/>
</dbReference>
<dbReference type="EvolutionaryTrace" id="Q9UBH0"/>
<dbReference type="GeneWiki" id="IL1F5"/>
<dbReference type="GenomeRNAi" id="26525"/>
<dbReference type="Pharos" id="Q9UBH0">
    <property type="development level" value="Tbio"/>
</dbReference>
<dbReference type="PRO" id="PR:Q9UBH0"/>
<dbReference type="Proteomes" id="UP000005640">
    <property type="component" value="Chromosome 2"/>
</dbReference>
<dbReference type="RNAct" id="Q9UBH0">
    <property type="molecule type" value="protein"/>
</dbReference>
<dbReference type="Bgee" id="ENSG00000136695">
    <property type="expression patterns" value="Expressed in amniotic fluid and 86 other cell types or tissues"/>
</dbReference>
<dbReference type="ExpressionAtlas" id="Q9UBH0">
    <property type="expression patterns" value="baseline and differential"/>
</dbReference>
<dbReference type="GO" id="GO:0005737">
    <property type="term" value="C:cytoplasm"/>
    <property type="evidence" value="ECO:0007669"/>
    <property type="project" value="UniProtKB-SubCell"/>
</dbReference>
<dbReference type="GO" id="GO:0005576">
    <property type="term" value="C:extracellular region"/>
    <property type="evidence" value="ECO:0000304"/>
    <property type="project" value="Reactome"/>
</dbReference>
<dbReference type="GO" id="GO:0005615">
    <property type="term" value="C:extracellular space"/>
    <property type="evidence" value="ECO:0000318"/>
    <property type="project" value="GO_Central"/>
</dbReference>
<dbReference type="GO" id="GO:0005125">
    <property type="term" value="F:cytokine activity"/>
    <property type="evidence" value="ECO:0007669"/>
    <property type="project" value="UniProtKB-KW"/>
</dbReference>
<dbReference type="GO" id="GO:0005152">
    <property type="term" value="F:interleukin-1 receptor antagonist activity"/>
    <property type="evidence" value="ECO:0000304"/>
    <property type="project" value="ProtInc"/>
</dbReference>
<dbReference type="GO" id="GO:0005149">
    <property type="term" value="F:interleukin-1 receptor binding"/>
    <property type="evidence" value="ECO:0007669"/>
    <property type="project" value="InterPro"/>
</dbReference>
<dbReference type="GO" id="GO:0019732">
    <property type="term" value="P:antifungal humoral response"/>
    <property type="evidence" value="ECO:0000315"/>
    <property type="project" value="UniProtKB"/>
</dbReference>
<dbReference type="GO" id="GO:0071222">
    <property type="term" value="P:cellular response to lipopolysaccharide"/>
    <property type="evidence" value="ECO:0000318"/>
    <property type="project" value="GO_Central"/>
</dbReference>
<dbReference type="GO" id="GO:0006955">
    <property type="term" value="P:immune response"/>
    <property type="evidence" value="ECO:0000318"/>
    <property type="project" value="GO_Central"/>
</dbReference>
<dbReference type="GO" id="GO:0006954">
    <property type="term" value="P:inflammatory response"/>
    <property type="evidence" value="ECO:0000318"/>
    <property type="project" value="GO_Central"/>
</dbReference>
<dbReference type="GO" id="GO:0045087">
    <property type="term" value="P:innate immune response"/>
    <property type="evidence" value="ECO:0007669"/>
    <property type="project" value="UniProtKB-KW"/>
</dbReference>
<dbReference type="GO" id="GO:0001960">
    <property type="term" value="P:negative regulation of cytokine-mediated signaling pathway"/>
    <property type="evidence" value="ECO:0000315"/>
    <property type="project" value="UniProtKB"/>
</dbReference>
<dbReference type="GO" id="GO:0032700">
    <property type="term" value="P:negative regulation of interleukin-17 production"/>
    <property type="evidence" value="ECO:0000315"/>
    <property type="project" value="UniProtKB"/>
</dbReference>
<dbReference type="GO" id="GO:0032715">
    <property type="term" value="P:negative regulation of interleukin-6 production"/>
    <property type="evidence" value="ECO:0007669"/>
    <property type="project" value="Ensembl"/>
</dbReference>
<dbReference type="GO" id="GO:0032689">
    <property type="term" value="P:negative regulation of type II interferon production"/>
    <property type="evidence" value="ECO:0000315"/>
    <property type="project" value="UniProtKB"/>
</dbReference>
<dbReference type="CDD" id="cd23303">
    <property type="entry name" value="beta-trefoil_IL36RA"/>
    <property type="match status" value="1"/>
</dbReference>
<dbReference type="FunFam" id="2.80.10.50:FF:000013">
    <property type="entry name" value="Interleukin-1"/>
    <property type="match status" value="1"/>
</dbReference>
<dbReference type="Gene3D" id="2.80.10.50">
    <property type="match status" value="1"/>
</dbReference>
<dbReference type="InterPro" id="IPR020877">
    <property type="entry name" value="IL-1_CS"/>
</dbReference>
<dbReference type="InterPro" id="IPR000975">
    <property type="entry name" value="IL-1_fam"/>
</dbReference>
<dbReference type="InterPro" id="IPR003297">
    <property type="entry name" value="IL-1RA/IL-36"/>
</dbReference>
<dbReference type="InterPro" id="IPR008996">
    <property type="entry name" value="IL1/FGF"/>
</dbReference>
<dbReference type="PANTHER" id="PTHR10078">
    <property type="entry name" value="INTERLEUKIN-1 FAMILY MEMBER"/>
    <property type="match status" value="1"/>
</dbReference>
<dbReference type="PANTHER" id="PTHR10078:SF32">
    <property type="entry name" value="INTERLEUKIN-36 RECEPTOR ANTAGONIST PROTEIN"/>
    <property type="match status" value="1"/>
</dbReference>
<dbReference type="Pfam" id="PF00340">
    <property type="entry name" value="IL1"/>
    <property type="match status" value="1"/>
</dbReference>
<dbReference type="PRINTS" id="PR00264">
    <property type="entry name" value="INTERLEUKIN1"/>
</dbReference>
<dbReference type="PRINTS" id="PR01360">
    <property type="entry name" value="INTRLEUKIN1X"/>
</dbReference>
<dbReference type="SMART" id="SM00125">
    <property type="entry name" value="IL1"/>
    <property type="match status" value="1"/>
</dbReference>
<dbReference type="SUPFAM" id="SSF50353">
    <property type="entry name" value="Cytokine"/>
    <property type="match status" value="1"/>
</dbReference>
<dbReference type="PROSITE" id="PS00253">
    <property type="entry name" value="INTERLEUKIN_1"/>
    <property type="match status" value="1"/>
</dbReference>
<feature type="initiator methionine" description="Removed" evidence="5">
    <location>
        <position position="1"/>
    </location>
</feature>
<feature type="chain" id="PRO_0000153642" description="Interleukin-36 receptor antagonist protein">
    <location>
        <begin position="2"/>
        <end position="155"/>
    </location>
</feature>
<feature type="disulfide bond" evidence="1">
    <location>
        <begin position="8"/>
        <end position="154"/>
    </location>
</feature>
<feature type="sequence variant" id="VAR_066646" description="In PSORS14; expression of the protein is severely impaired compared to wild-type; the mutant protein is substantially less able to inhibit IL1RL2 signaling than wild-type; dbSNP:rs387906914." evidence="4">
    <original>L</original>
    <variation>P</variation>
    <location>
        <position position="27"/>
    </location>
</feature>
<feature type="sequence variant" id="VAR_023239" description="In dbSNP:rs28938777." evidence="9">
    <original>N</original>
    <variation>S</variation>
    <location>
        <position position="47"/>
    </location>
</feature>
<feature type="sequence variant" id="VAR_066647" description="In PSORS14; dbSNP:rs151325121." evidence="3">
    <original>R</original>
    <variation>W</variation>
    <location>
        <position position="48"/>
    </location>
</feature>
<feature type="sequence variant" id="VAR_066648" description="In PSORS14; dbSNP:rs144478519." evidence="3">
    <original>S</original>
    <variation>L</variation>
    <location>
        <position position="113"/>
    </location>
</feature>
<feature type="sequence variant" id="VAR_068972" description="In PSORS14; shows impaired expression of the mutant protein which fails to antagonize the IL-36 signaling pathway; dbSNP:rs397514629." evidence="6">
    <original>T</original>
    <variation>R</variation>
    <location>
        <position position="123"/>
    </location>
</feature>
<feature type="strand" evidence="14">
    <location>
        <begin position="9"/>
        <end position="13"/>
    </location>
</feature>
<feature type="strand" evidence="14">
    <location>
        <begin position="18"/>
        <end position="22"/>
    </location>
</feature>
<feature type="strand" evidence="14">
    <location>
        <begin position="25"/>
        <end position="29"/>
    </location>
</feature>
<feature type="strand" evidence="14">
    <location>
        <begin position="42"/>
        <end position="46"/>
    </location>
</feature>
<feature type="helix" evidence="13">
    <location>
        <begin position="52"/>
        <end position="54"/>
    </location>
</feature>
<feature type="strand" evidence="14">
    <location>
        <begin position="55"/>
        <end position="61"/>
    </location>
</feature>
<feature type="turn" evidence="14">
    <location>
        <begin position="62"/>
        <end position="65"/>
    </location>
</feature>
<feature type="strand" evidence="14">
    <location>
        <begin position="66"/>
        <end position="69"/>
    </location>
</feature>
<feature type="strand" evidence="14">
    <location>
        <begin position="72"/>
        <end position="75"/>
    </location>
</feature>
<feature type="strand" evidence="14">
    <location>
        <begin position="79"/>
        <end position="82"/>
    </location>
</feature>
<feature type="helix" evidence="14">
    <location>
        <begin position="85"/>
        <end position="89"/>
    </location>
</feature>
<feature type="helix" evidence="14">
    <location>
        <begin position="96"/>
        <end position="98"/>
    </location>
</feature>
<feature type="strand" evidence="14">
    <location>
        <begin position="99"/>
        <end position="102"/>
    </location>
</feature>
<feature type="strand" evidence="14">
    <location>
        <begin position="109"/>
        <end position="116"/>
    </location>
</feature>
<feature type="strand" evidence="14">
    <location>
        <begin position="120"/>
        <end position="123"/>
    </location>
</feature>
<feature type="strand" evidence="14">
    <location>
        <begin position="132"/>
        <end position="135"/>
    </location>
</feature>
<feature type="strand" evidence="14">
    <location>
        <begin position="149"/>
        <end position="153"/>
    </location>
</feature>
<reference key="1">
    <citation type="journal article" date="2000" name="J. Biol. Chem.">
        <title>Four new members expand the IL-1 superfamily.</title>
        <authorList>
            <person name="Smith D.E."/>
            <person name="Renshaw B.R."/>
            <person name="Ketchem R.R."/>
            <person name="Kubin M."/>
            <person name="Garka K.E."/>
            <person name="Sims J.E."/>
        </authorList>
    </citation>
    <scope>NUCLEOTIDE SEQUENCE [MRNA]</scope>
    <source>
        <tissue>Placenta</tissue>
    </source>
</reference>
<reference key="2">
    <citation type="journal article" date="1999" name="Biochem. Biophys. Res. Commun.">
        <title>IL1HY1: a novel interleukin-1 receptor antagonist gene.</title>
        <authorList>
            <person name="Mulero J.J."/>
            <person name="Pace A.M."/>
            <person name="Nelken S.T."/>
            <person name="Loeb D.B."/>
            <person name="Correa T.R."/>
            <person name="Drmanac R."/>
            <person name="Ford J.E."/>
        </authorList>
    </citation>
    <scope>NUCLEOTIDE SEQUENCE [MRNA]</scope>
    <source>
        <tissue>Fetal skin</tissue>
    </source>
</reference>
<reference key="3">
    <citation type="journal article" date="2000" name="Eur. J. Immunol.">
        <title>A tissue specific IL-1 receptor antagonist homolog from the IL-1 cluster lacks IL-1, IL-1ra, IL-18 and IL-18 antagonist activities.</title>
        <authorList>
            <person name="Barton J.L."/>
            <person name="Herbst R."/>
            <person name="Bosisio D."/>
            <person name="Higgins L."/>
            <person name="Nicklin M.J.H."/>
        </authorList>
    </citation>
    <scope>NUCLEOTIDE SEQUENCE [MRNA]</scope>
    <source>
        <tissue>Placenta</tissue>
    </source>
</reference>
<reference key="4">
    <citation type="journal article" date="2001" name="J. Immunol.">
        <title>Two novel IL-1 family members, IL-1 delta and IL-1 epsilon, function as an antagonist and agonist of NF-kappa B activation through the orphan IL-1 receptor-related protein 2.</title>
        <authorList>
            <person name="Debets R."/>
            <person name="Timans J.C."/>
            <person name="Homey B."/>
            <person name="Zurawski S."/>
            <person name="Sana T.R."/>
            <person name="Lo S."/>
            <person name="Wagner J."/>
            <person name="Edwards G."/>
            <person name="Clifford T."/>
            <person name="Menon S."/>
            <person name="Bazan J.F."/>
            <person name="Kastelein R.A."/>
        </authorList>
    </citation>
    <scope>NUCLEOTIDE SEQUENCE [MRNA]</scope>
    <scope>FUNCTION</scope>
    <scope>TISSUE SPECIFICITY</scope>
</reference>
<reference key="5">
    <citation type="journal article" date="2000" name="Genomics">
        <title>Identification and gene organization of three novel members of the IL-1 family on human chromosome 2.</title>
        <authorList>
            <person name="Busfield S.J."/>
            <person name="Comrack C.A."/>
            <person name="Yu G."/>
            <person name="Chickering T.W."/>
            <person name="Smutko J.S."/>
            <person name="Zhou H."/>
            <person name="Leiby K.R."/>
            <person name="Holmgren L.M."/>
            <person name="Gearing D.P."/>
            <person name="Pan Y."/>
        </authorList>
    </citation>
    <scope>NUCLEOTIDE SEQUENCE [GENOMIC DNA]</scope>
</reference>
<reference key="6">
    <citation type="journal article" date="2002" name="Genomics">
        <title>A sequence-based map of the nine genes of the human interleukin-1 cluster.</title>
        <authorList>
            <person name="Nicklin M.J.H."/>
            <person name="Barton J.L."/>
            <person name="Nguyen M."/>
            <person name="Fitzgerald M.G."/>
            <person name="Duff W.G."/>
            <person name="Kornman K."/>
        </authorList>
    </citation>
    <scope>NUCLEOTIDE SEQUENCE [GENOMIC DNA]</scope>
</reference>
<reference key="7">
    <citation type="journal article" date="2003" name="Genome Res.">
        <title>The secreted protein discovery initiative (SPDI), a large-scale effort to identify novel human secreted and transmembrane proteins: a bioinformatics assessment.</title>
        <authorList>
            <person name="Clark H.F."/>
            <person name="Gurney A.L."/>
            <person name="Abaya E."/>
            <person name="Baker K."/>
            <person name="Baldwin D.T."/>
            <person name="Brush J."/>
            <person name="Chen J."/>
            <person name="Chow B."/>
            <person name="Chui C."/>
            <person name="Crowley C."/>
            <person name="Currell B."/>
            <person name="Deuel B."/>
            <person name="Dowd P."/>
            <person name="Eaton D."/>
            <person name="Foster J.S."/>
            <person name="Grimaldi C."/>
            <person name="Gu Q."/>
            <person name="Hass P.E."/>
            <person name="Heldens S."/>
            <person name="Huang A."/>
            <person name="Kim H.S."/>
            <person name="Klimowski L."/>
            <person name="Jin Y."/>
            <person name="Johnson S."/>
            <person name="Lee J."/>
            <person name="Lewis L."/>
            <person name="Liao D."/>
            <person name="Mark M.R."/>
            <person name="Robbie E."/>
            <person name="Sanchez C."/>
            <person name="Schoenfeld J."/>
            <person name="Seshagiri S."/>
            <person name="Simmons L."/>
            <person name="Singh J."/>
            <person name="Smith V."/>
            <person name="Stinson J."/>
            <person name="Vagts A."/>
            <person name="Vandlen R.L."/>
            <person name="Watanabe C."/>
            <person name="Wieand D."/>
            <person name="Woods K."/>
            <person name="Xie M.-H."/>
            <person name="Yansura D.G."/>
            <person name="Yi S."/>
            <person name="Yu G."/>
            <person name="Yuan J."/>
            <person name="Zhang M."/>
            <person name="Zhang Z."/>
            <person name="Goddard A.D."/>
            <person name="Wood W.I."/>
            <person name="Godowski P.J."/>
            <person name="Gray A.M."/>
        </authorList>
    </citation>
    <scope>NUCLEOTIDE SEQUENCE [LARGE SCALE MRNA]</scope>
</reference>
<reference key="8">
    <citation type="journal article" date="2004" name="Nat. Genet.">
        <title>Complete sequencing and characterization of 21,243 full-length human cDNAs.</title>
        <authorList>
            <person name="Ota T."/>
            <person name="Suzuki Y."/>
            <person name="Nishikawa T."/>
            <person name="Otsuki T."/>
            <person name="Sugiyama T."/>
            <person name="Irie R."/>
            <person name="Wakamatsu A."/>
            <person name="Hayashi K."/>
            <person name="Sato H."/>
            <person name="Nagai K."/>
            <person name="Kimura K."/>
            <person name="Makita H."/>
            <person name="Sekine M."/>
            <person name="Obayashi M."/>
            <person name="Nishi T."/>
            <person name="Shibahara T."/>
            <person name="Tanaka T."/>
            <person name="Ishii S."/>
            <person name="Yamamoto J."/>
            <person name="Saito K."/>
            <person name="Kawai Y."/>
            <person name="Isono Y."/>
            <person name="Nakamura Y."/>
            <person name="Nagahari K."/>
            <person name="Murakami K."/>
            <person name="Yasuda T."/>
            <person name="Iwayanagi T."/>
            <person name="Wagatsuma M."/>
            <person name="Shiratori A."/>
            <person name="Sudo H."/>
            <person name="Hosoiri T."/>
            <person name="Kaku Y."/>
            <person name="Kodaira H."/>
            <person name="Kondo H."/>
            <person name="Sugawara M."/>
            <person name="Takahashi M."/>
            <person name="Kanda K."/>
            <person name="Yokoi T."/>
            <person name="Furuya T."/>
            <person name="Kikkawa E."/>
            <person name="Omura Y."/>
            <person name="Abe K."/>
            <person name="Kamihara K."/>
            <person name="Katsuta N."/>
            <person name="Sato K."/>
            <person name="Tanikawa M."/>
            <person name="Yamazaki M."/>
            <person name="Ninomiya K."/>
            <person name="Ishibashi T."/>
            <person name="Yamashita H."/>
            <person name="Murakawa K."/>
            <person name="Fujimori K."/>
            <person name="Tanai H."/>
            <person name="Kimata M."/>
            <person name="Watanabe M."/>
            <person name="Hiraoka S."/>
            <person name="Chiba Y."/>
            <person name="Ishida S."/>
            <person name="Ono Y."/>
            <person name="Takiguchi S."/>
            <person name="Watanabe S."/>
            <person name="Yosida M."/>
            <person name="Hotuta T."/>
            <person name="Kusano J."/>
            <person name="Kanehori K."/>
            <person name="Takahashi-Fujii A."/>
            <person name="Hara H."/>
            <person name="Tanase T.-O."/>
            <person name="Nomura Y."/>
            <person name="Togiya S."/>
            <person name="Komai F."/>
            <person name="Hara R."/>
            <person name="Takeuchi K."/>
            <person name="Arita M."/>
            <person name="Imose N."/>
            <person name="Musashino K."/>
            <person name="Yuuki H."/>
            <person name="Oshima A."/>
            <person name="Sasaki N."/>
            <person name="Aotsuka S."/>
            <person name="Yoshikawa Y."/>
            <person name="Matsunawa H."/>
            <person name="Ichihara T."/>
            <person name="Shiohata N."/>
            <person name="Sano S."/>
            <person name="Moriya S."/>
            <person name="Momiyama H."/>
            <person name="Satoh N."/>
            <person name="Takami S."/>
            <person name="Terashima Y."/>
            <person name="Suzuki O."/>
            <person name="Nakagawa S."/>
            <person name="Senoh A."/>
            <person name="Mizoguchi H."/>
            <person name="Goto Y."/>
            <person name="Shimizu F."/>
            <person name="Wakebe H."/>
            <person name="Hishigaki H."/>
            <person name="Watanabe T."/>
            <person name="Sugiyama A."/>
            <person name="Takemoto M."/>
            <person name="Kawakami B."/>
            <person name="Yamazaki M."/>
            <person name="Watanabe K."/>
            <person name="Kumagai A."/>
            <person name="Itakura S."/>
            <person name="Fukuzumi Y."/>
            <person name="Fujimori Y."/>
            <person name="Komiyama M."/>
            <person name="Tashiro H."/>
            <person name="Tanigami A."/>
            <person name="Fujiwara T."/>
            <person name="Ono T."/>
            <person name="Yamada K."/>
            <person name="Fujii Y."/>
            <person name="Ozaki K."/>
            <person name="Hirao M."/>
            <person name="Ohmori Y."/>
            <person name="Kawabata A."/>
            <person name="Hikiji T."/>
            <person name="Kobatake N."/>
            <person name="Inagaki H."/>
            <person name="Ikema Y."/>
            <person name="Okamoto S."/>
            <person name="Okitani R."/>
            <person name="Kawakami T."/>
            <person name="Noguchi S."/>
            <person name="Itoh T."/>
            <person name="Shigeta K."/>
            <person name="Senba T."/>
            <person name="Matsumura K."/>
            <person name="Nakajima Y."/>
            <person name="Mizuno T."/>
            <person name="Morinaga M."/>
            <person name="Sasaki M."/>
            <person name="Togashi T."/>
            <person name="Oyama M."/>
            <person name="Hata H."/>
            <person name="Watanabe M."/>
            <person name="Komatsu T."/>
            <person name="Mizushima-Sugano J."/>
            <person name="Satoh T."/>
            <person name="Shirai Y."/>
            <person name="Takahashi Y."/>
            <person name="Nakagawa K."/>
            <person name="Okumura K."/>
            <person name="Nagase T."/>
            <person name="Nomura N."/>
            <person name="Kikuchi H."/>
            <person name="Masuho Y."/>
            <person name="Yamashita R."/>
            <person name="Nakai K."/>
            <person name="Yada T."/>
            <person name="Nakamura Y."/>
            <person name="Ohara O."/>
            <person name="Isogai T."/>
            <person name="Sugano S."/>
        </authorList>
    </citation>
    <scope>NUCLEOTIDE SEQUENCE [LARGE SCALE MRNA]</scope>
    <source>
        <tissue>Cervix</tissue>
    </source>
</reference>
<reference key="9">
    <citation type="submission" date="2005-03" db="EMBL/GenBank/DDBJ databases">
        <authorList>
            <consortium name="SeattleSNPs variation discovery resource"/>
        </authorList>
    </citation>
    <scope>NUCLEOTIDE SEQUENCE [GENOMIC DNA]</scope>
    <scope>VARIANT SER-47</scope>
</reference>
<reference key="10">
    <citation type="journal article" date="2005" name="Nature">
        <title>Generation and annotation of the DNA sequences of human chromosomes 2 and 4.</title>
        <authorList>
            <person name="Hillier L.W."/>
            <person name="Graves T.A."/>
            <person name="Fulton R.S."/>
            <person name="Fulton L.A."/>
            <person name="Pepin K.H."/>
            <person name="Minx P."/>
            <person name="Wagner-McPherson C."/>
            <person name="Layman D."/>
            <person name="Wylie K."/>
            <person name="Sekhon M."/>
            <person name="Becker M.C."/>
            <person name="Fewell G.A."/>
            <person name="Delehaunty K.D."/>
            <person name="Miner T.L."/>
            <person name="Nash W.E."/>
            <person name="Kremitzki C."/>
            <person name="Oddy L."/>
            <person name="Du H."/>
            <person name="Sun H."/>
            <person name="Bradshaw-Cordum H."/>
            <person name="Ali J."/>
            <person name="Carter J."/>
            <person name="Cordes M."/>
            <person name="Harris A."/>
            <person name="Isak A."/>
            <person name="van Brunt A."/>
            <person name="Nguyen C."/>
            <person name="Du F."/>
            <person name="Courtney L."/>
            <person name="Kalicki J."/>
            <person name="Ozersky P."/>
            <person name="Abbott S."/>
            <person name="Armstrong J."/>
            <person name="Belter E.A."/>
            <person name="Caruso L."/>
            <person name="Cedroni M."/>
            <person name="Cotton M."/>
            <person name="Davidson T."/>
            <person name="Desai A."/>
            <person name="Elliott G."/>
            <person name="Erb T."/>
            <person name="Fronick C."/>
            <person name="Gaige T."/>
            <person name="Haakenson W."/>
            <person name="Haglund K."/>
            <person name="Holmes A."/>
            <person name="Harkins R."/>
            <person name="Kim K."/>
            <person name="Kruchowski S.S."/>
            <person name="Strong C.M."/>
            <person name="Grewal N."/>
            <person name="Goyea E."/>
            <person name="Hou S."/>
            <person name="Levy A."/>
            <person name="Martinka S."/>
            <person name="Mead K."/>
            <person name="McLellan M.D."/>
            <person name="Meyer R."/>
            <person name="Randall-Maher J."/>
            <person name="Tomlinson C."/>
            <person name="Dauphin-Kohlberg S."/>
            <person name="Kozlowicz-Reilly A."/>
            <person name="Shah N."/>
            <person name="Swearengen-Shahid S."/>
            <person name="Snider J."/>
            <person name="Strong J.T."/>
            <person name="Thompson J."/>
            <person name="Yoakum M."/>
            <person name="Leonard S."/>
            <person name="Pearman C."/>
            <person name="Trani L."/>
            <person name="Radionenko M."/>
            <person name="Waligorski J.E."/>
            <person name="Wang C."/>
            <person name="Rock S.M."/>
            <person name="Tin-Wollam A.-M."/>
            <person name="Maupin R."/>
            <person name="Latreille P."/>
            <person name="Wendl M.C."/>
            <person name="Yang S.-P."/>
            <person name="Pohl C."/>
            <person name="Wallis J.W."/>
            <person name="Spieth J."/>
            <person name="Bieri T.A."/>
            <person name="Berkowicz N."/>
            <person name="Nelson J.O."/>
            <person name="Osborne J."/>
            <person name="Ding L."/>
            <person name="Meyer R."/>
            <person name="Sabo A."/>
            <person name="Shotland Y."/>
            <person name="Sinha P."/>
            <person name="Wohldmann P.E."/>
            <person name="Cook L.L."/>
            <person name="Hickenbotham M.T."/>
            <person name="Eldred J."/>
            <person name="Williams D."/>
            <person name="Jones T.A."/>
            <person name="She X."/>
            <person name="Ciccarelli F.D."/>
            <person name="Izaurralde E."/>
            <person name="Taylor J."/>
            <person name="Schmutz J."/>
            <person name="Myers R.M."/>
            <person name="Cox D.R."/>
            <person name="Huang X."/>
            <person name="McPherson J.D."/>
            <person name="Mardis E.R."/>
            <person name="Clifton S.W."/>
            <person name="Warren W.C."/>
            <person name="Chinwalla A.T."/>
            <person name="Eddy S.R."/>
            <person name="Marra M.A."/>
            <person name="Ovcharenko I."/>
            <person name="Furey T.S."/>
            <person name="Miller W."/>
            <person name="Eichler E.E."/>
            <person name="Bork P."/>
            <person name="Suyama M."/>
            <person name="Torrents D."/>
            <person name="Waterston R.H."/>
            <person name="Wilson R.K."/>
        </authorList>
    </citation>
    <scope>NUCLEOTIDE SEQUENCE [LARGE SCALE GENOMIC DNA]</scope>
</reference>
<reference key="11">
    <citation type="submission" date="2005-07" db="EMBL/GenBank/DDBJ databases">
        <authorList>
            <person name="Mural R.J."/>
            <person name="Istrail S."/>
            <person name="Sutton G.G."/>
            <person name="Florea L."/>
            <person name="Halpern A.L."/>
            <person name="Mobarry C.M."/>
            <person name="Lippert R."/>
            <person name="Walenz B."/>
            <person name="Shatkay H."/>
            <person name="Dew I."/>
            <person name="Miller J.R."/>
            <person name="Flanigan M.J."/>
            <person name="Edwards N.J."/>
            <person name="Bolanos R."/>
            <person name="Fasulo D."/>
            <person name="Halldorsson B.V."/>
            <person name="Hannenhalli S."/>
            <person name="Turner R."/>
            <person name="Yooseph S."/>
            <person name="Lu F."/>
            <person name="Nusskern D.R."/>
            <person name="Shue B.C."/>
            <person name="Zheng X.H."/>
            <person name="Zhong F."/>
            <person name="Delcher A.L."/>
            <person name="Huson D.H."/>
            <person name="Kravitz S.A."/>
            <person name="Mouchard L."/>
            <person name="Reinert K."/>
            <person name="Remington K.A."/>
            <person name="Clark A.G."/>
            <person name="Waterman M.S."/>
            <person name="Eichler E.E."/>
            <person name="Adams M.D."/>
            <person name="Hunkapiller M.W."/>
            <person name="Myers E.W."/>
            <person name="Venter J.C."/>
        </authorList>
    </citation>
    <scope>NUCLEOTIDE SEQUENCE [LARGE SCALE GENOMIC DNA]</scope>
</reference>
<reference key="12">
    <citation type="journal article" date="2004" name="Genome Res.">
        <title>The status, quality, and expansion of the NIH full-length cDNA project: the Mammalian Gene Collection (MGC).</title>
        <authorList>
            <consortium name="The MGC Project Team"/>
        </authorList>
    </citation>
    <scope>NUCLEOTIDE SEQUENCE [LARGE SCALE MRNA]</scope>
    <source>
        <tissue>Placenta</tissue>
    </source>
</reference>
<reference key="13">
    <citation type="journal article" date="2011" name="J. Biol. Chem.">
        <title>Interleukin-36 (IL-36) ligands require processing for full agonist (IL-36alpha, IL-36beta, and IL-36gamma) or antagonist (IL-36Ra) activity.</title>
        <authorList>
            <person name="Towne J.E."/>
            <person name="Renshaw B.R."/>
            <person name="Douangpanya J."/>
            <person name="Lipsky B.P."/>
            <person name="Shen M."/>
            <person name="Gabel C.A."/>
            <person name="Sims J.E."/>
        </authorList>
    </citation>
    <scope>FUNCTION</scope>
    <scope>CLEAVAGE OF INITIATOR METHIONINE</scope>
</reference>
<reference key="14">
    <citation type="journal article" date="2013" name="Eur. J. Immunol.">
        <title>The IL-36 receptor pathway regulates Aspergillus fumigatus-induced Th1 and Th17 responses.</title>
        <authorList>
            <person name="Gresnigt M.S."/>
            <person name="Roesler B."/>
            <person name="Jacobs C.W."/>
            <person name="Becker K.L."/>
            <person name="Joosten L.A."/>
            <person name="van der Meer J.W."/>
            <person name="Netea M.G."/>
            <person name="Dinarello C.A."/>
            <person name="van de Veerdonk F.L."/>
        </authorList>
    </citation>
    <scope>FUNCTION</scope>
    <scope>INDUCTION</scope>
</reference>
<reference key="15">
    <citation type="journal article" date="2020" name="Cell">
        <title>A Translocation Pathway for Vesicle-Mediated Unconventional Protein Secretion.</title>
        <authorList>
            <person name="Zhang M."/>
            <person name="Liu L."/>
            <person name="Lin X."/>
            <person name="Wang Y."/>
            <person name="Li Y."/>
            <person name="Guo Q."/>
            <person name="Li S."/>
            <person name="Sun Y."/>
            <person name="Tao X."/>
            <person name="Zhang D."/>
            <person name="Lv X."/>
            <person name="Zheng L."/>
            <person name="Ge L."/>
        </authorList>
    </citation>
    <scope>SUBCELLULAR LOCATION</scope>
    <scope>INTERACTION WITH TMED10</scope>
</reference>
<reference key="16">
    <citation type="journal article" date="2011" name="Am. J. Hum. Genet.">
        <title>Mutations in IL36RN/IL1F5 are associated with the severe episodic inflammatory skin disease known as generalized pustular psoriasis.</title>
        <authorList>
            <person name="Onoufriadis A."/>
            <person name="Simpson M.A."/>
            <person name="Pink A.E."/>
            <person name="Di Meglio P."/>
            <person name="Smith C.H."/>
            <person name="Pullabhatla V."/>
            <person name="Knight J."/>
            <person name="Spain S.L."/>
            <person name="Nestle F.O."/>
            <person name="Burden A.D."/>
            <person name="Capon F."/>
            <person name="Trembath R.C."/>
            <person name="Barker J.N."/>
        </authorList>
    </citation>
    <scope>VARIANTS PSORS14 TRP-48 AND LEU-113</scope>
</reference>
<reference key="17">
    <citation type="journal article" date="2011" name="N. Engl. J. Med.">
        <title>Interleukin-36-receptor antagonist deficiency and generalized pustular psoriasis.</title>
        <authorList>
            <person name="Marrakchi S."/>
            <person name="Guigue P."/>
            <person name="Renshaw B.R."/>
            <person name="Puel A."/>
            <person name="Pei X.Y."/>
            <person name="Fraitag S."/>
            <person name="Zribi J."/>
            <person name="Bal E."/>
            <person name="Cluzeau C."/>
            <person name="Chrabieh M."/>
            <person name="Towne J.E."/>
            <person name="Douangpanya J."/>
            <person name="Pons C."/>
            <person name="Mansour S."/>
            <person name="Serre V."/>
            <person name="Makni H."/>
            <person name="Mahfoudh N."/>
            <person name="Fakhfakh F."/>
            <person name="Bodemer C."/>
            <person name="Feingold J."/>
            <person name="Hadj-Rabia S."/>
            <person name="Favre M."/>
            <person name="Genin E."/>
            <person name="Sahbatou M."/>
            <person name="Munnich A."/>
            <person name="Casanova J.L."/>
            <person name="Sims J.E."/>
            <person name="Turki H."/>
            <person name="Bachelez H."/>
            <person name="Smahi A."/>
        </authorList>
    </citation>
    <scope>VARIANT PSORS14 PRO-27</scope>
    <scope>CHARACTERIZATION OF VARIANT PSORS14 PRO-27</scope>
</reference>
<reference key="18">
    <citation type="journal article" date="2013" name="Hum. Mutat.">
        <title>Mutation analysis of the IL36RN gene in 14 Japanese patients with generalized pustular psoriasis.</title>
        <authorList>
            <person name="Farooq M."/>
            <person name="Nakai H."/>
            <person name="Fujimoto A."/>
            <person name="Fujikawa H."/>
            <person name="Matsuyama A."/>
            <person name="Kariya N."/>
            <person name="Aizawa A."/>
            <person name="Fujiwara H."/>
            <person name="Ito M."/>
            <person name="Shimomura Y."/>
        </authorList>
    </citation>
    <scope>VARIANT PSORS14 ARG-123</scope>
    <scope>CHARACTERIZATION OF VARIANT PSORS14 ARG-123</scope>
</reference>
<organism>
    <name type="scientific">Homo sapiens</name>
    <name type="common">Human</name>
    <dbReference type="NCBI Taxonomy" id="9606"/>
    <lineage>
        <taxon>Eukaryota</taxon>
        <taxon>Metazoa</taxon>
        <taxon>Chordata</taxon>
        <taxon>Craniata</taxon>
        <taxon>Vertebrata</taxon>
        <taxon>Euteleostomi</taxon>
        <taxon>Mammalia</taxon>
        <taxon>Eutheria</taxon>
        <taxon>Euarchontoglires</taxon>
        <taxon>Primates</taxon>
        <taxon>Haplorrhini</taxon>
        <taxon>Catarrhini</taxon>
        <taxon>Hominidae</taxon>
        <taxon>Homo</taxon>
    </lineage>
</organism>
<gene>
    <name evidence="12" type="primary">IL36RN</name>
    <name type="synonym">FIL1D</name>
    <name type="synonym">IL1F5</name>
    <name type="synonym">IL1HY1</name>
    <name type="synonym">IL1L1</name>
    <name type="synonym">IL1RP3</name>
    <name type="ORF">UNQ1896/PRO4342</name>
</gene>
<name>I36RA_HUMAN</name>
<comment type="function">
    <text evidence="2 5 7">Inhibits the activity of interleukin-36 (IL36A,IL36B and IL36G) by binding to receptor IL1RL2 and preventing its association with the coreceptor IL1RAP for signaling. Part of the IL-36 signaling system that is thought to be present in epithelial barriers and to take part in local inflammatory response; similar to the IL-1 system with which it shares the coreceptor. Proposed to play a role in skin inflammation. May be involved in the innate immune response to fungal pathogens, such as Aspergillus fumigatus. May activate an anti-inflammatory signaling pathway by recruiting SIGIRR.</text>
</comment>
<comment type="subunit">
    <text evidence="8">Interacts with cargo receptor TMED10; the interaction mediates the translocation from the cytoplasm into the ERGIC (endoplasmic reticulum-Golgi intermediate compartment) and thereby secretion.</text>
</comment>
<comment type="interaction">
    <interactant intactId="EBI-465156">
        <id>Q9UBH0</id>
    </interactant>
    <interactant intactId="EBI-712648">
        <id>O95994</id>
        <label>AGR2</label>
    </interactant>
    <organismsDiffer>false</organismsDiffer>
    <experiments>3</experiments>
</comment>
<comment type="interaction">
    <interactant intactId="EBI-465156">
        <id>Q9UBH0</id>
    </interactant>
    <interactant intactId="EBI-2371151">
        <id>Q9Y2T2</id>
        <label>AP3M1</label>
    </interactant>
    <organismsDiffer>false</organismsDiffer>
    <experiments>3</experiments>
</comment>
<comment type="interaction">
    <interactant intactId="EBI-465156">
        <id>Q9UBH0</id>
    </interactant>
    <interactant intactId="EBI-12019444">
        <id>O95628-2</id>
        <label>CNOT4</label>
    </interactant>
    <organismsDiffer>false</organismsDiffer>
    <experiments>5</experiments>
</comment>
<comment type="interaction">
    <interactant intactId="EBI-465156">
        <id>Q9UBH0</id>
    </interactant>
    <interactant intactId="EBI-11982645">
        <id>Q8N4Y2-3</id>
        <label>CRACR2B</label>
    </interactant>
    <organismsDiffer>false</organismsDiffer>
    <experiments>3</experiments>
</comment>
<comment type="interaction">
    <interactant intactId="EBI-465156">
        <id>Q9UBH0</id>
    </interactant>
    <interactant intactId="EBI-742054">
        <id>Q96D03</id>
        <label>DDIT4L</label>
    </interactant>
    <organismsDiffer>false</organismsDiffer>
    <experiments>3</experiments>
</comment>
<comment type="interaction">
    <interactant intactId="EBI-465156">
        <id>Q9UBH0</id>
    </interactant>
    <interactant intactId="EBI-12197079">
        <id>P84074</id>
        <label>HPCA</label>
    </interactant>
    <organismsDiffer>false</organismsDiffer>
    <experiments>3</experiments>
</comment>
<comment type="interaction">
    <interactant intactId="EBI-465156">
        <id>Q9UBH0</id>
    </interactant>
    <interactant intactId="EBI-6509505">
        <id>Q0VD86</id>
        <label>INCA1</label>
    </interactant>
    <organismsDiffer>false</organismsDiffer>
    <experiments>3</experiments>
</comment>
<comment type="interaction">
    <interactant intactId="EBI-465156">
        <id>Q9UBH0</id>
    </interactant>
    <interactant intactId="EBI-448378">
        <id>Q9NWZ3</id>
        <label>IRAK4</label>
    </interactant>
    <organismsDiffer>false</organismsDiffer>
    <experiments>3</experiments>
</comment>
<comment type="interaction">
    <interactant intactId="EBI-465156">
        <id>Q9UBH0</id>
    </interactant>
    <interactant intactId="EBI-307352">
        <id>Q04864</id>
        <label>REL</label>
    </interactant>
    <organismsDiffer>false</organismsDiffer>
    <experiments>3</experiments>
</comment>
<comment type="interaction">
    <interactant intactId="EBI-465156">
        <id>Q9UBH0</id>
    </interactant>
    <interactant intactId="EBI-10829018">
        <id>Q04864-2</id>
        <label>REL</label>
    </interactant>
    <organismsDiffer>false</organismsDiffer>
    <experiments>3</experiments>
</comment>
<comment type="interaction">
    <interactant intactId="EBI-465156">
        <id>Q9UBH0</id>
    </interactant>
    <interactant intactId="EBI-19952306">
        <id>O14492-2</id>
        <label>SH2B2</label>
    </interactant>
    <organismsDiffer>false</organismsDiffer>
    <experiments>3</experiments>
</comment>
<comment type="interaction">
    <interactant intactId="EBI-465156">
        <id>Q9UBH0</id>
    </interactant>
    <interactant intactId="EBI-2902395">
        <id>Q9BWW4</id>
        <label>SSBP3</label>
    </interactant>
    <organismsDiffer>false</organismsDiffer>
    <experiments>8</experiments>
</comment>
<comment type="interaction">
    <interactant intactId="EBI-465156">
        <id>Q9UBH0</id>
    </interactant>
    <interactant intactId="EBI-744719">
        <id>Q9BWG4</id>
        <label>SSBP4</label>
    </interactant>
    <organismsDiffer>false</organismsDiffer>
    <experiments>4</experiments>
</comment>
<comment type="interaction">
    <interactant intactId="EBI-465156">
        <id>Q9UBH0</id>
    </interactant>
    <interactant intactId="EBI-10267507">
        <id>Q8N7F7</id>
        <label>UBL4B</label>
    </interactant>
    <organismsDiffer>false</organismsDiffer>
    <experiments>3</experiments>
</comment>
<comment type="interaction">
    <interactant intactId="EBI-465156">
        <id>Q9UBH0</id>
    </interactant>
    <interactant intactId="EBI-2818641">
        <id>Q969J2</id>
        <label>ZKSCAN4</label>
    </interactant>
    <organismsDiffer>false</organismsDiffer>
    <experiments>3</experiments>
</comment>
<comment type="subcellular location">
    <subcellularLocation>
        <location evidence="8">Cytoplasm</location>
    </subcellularLocation>
    <subcellularLocation>
        <location evidence="8">Secreted</location>
    </subcellularLocation>
    <text evidence="8">The secretion is dependent on protein unfolding and facilitated by the cargo receptor TMED10; it results in protein translocation from the cytoplasm into the ERGIC (endoplasmic reticulum-Golgi intermediate compartment) followed by vesicle entry and secretion.</text>
</comment>
<comment type="tissue specificity">
    <text evidence="2">Predominantly expressed in skin keratinocytes but not in fibroblasts, endothelial cells or melanocytes. Detected also in the spleen, brain leukocyte and macrophage cell types. Increased in lesional psoriasis skin.</text>
</comment>
<comment type="induction">
    <text evidence="7">By phorbol ester (PMA) and bacterial lipopolysaccharides (LPS) treatment in macrophage cell line. By Aspergillus fumigatus conidia in peripheral blood mnonocytes.</text>
</comment>
<comment type="disease" evidence="3 4 6">
    <disease id="DI-03262">
        <name>Psoriasis 14, pustular</name>
        <acronym>PSORS14</acronym>
        <description>A life-threatening disease defined by repeated flares of sudden onset consisting of diffuse erythematous skin eruption characterized by rapid coverage with pustules, high-grade fever, asthenia, marked leukocytosis, and elevated serum levels of C-reactive protein.</description>
        <dbReference type="MIM" id="614204"/>
    </disease>
    <text>The disease is caused by variants affecting the gene represented in this entry.</text>
</comment>
<comment type="similarity">
    <text evidence="11">Belongs to the IL-1 family.</text>
</comment>
<comment type="online information" name="Wikipedia">
    <link uri="https://en.wikipedia.org/wiki/Interleukin_1"/>
    <text>Interleukin-1 entry</text>
</comment>
<proteinExistence type="evidence at protein level"/>
<accession>Q9UBH0</accession>
<accession>A8K2I4</accession>
<accession>Q56AT9</accession>
<accession>Q7RTZ6</accession>
<keyword id="KW-0002">3D-structure</keyword>
<keyword id="KW-0202">Cytokine</keyword>
<keyword id="KW-0963">Cytoplasm</keyword>
<keyword id="KW-0225">Disease variant</keyword>
<keyword id="KW-1015">Disulfide bond</keyword>
<keyword id="KW-0391">Immunity</keyword>
<keyword id="KW-0399">Innate immunity</keyword>
<keyword id="KW-1267">Proteomics identification</keyword>
<keyword id="KW-1185">Reference proteome</keyword>
<keyword id="KW-0964">Secreted</keyword>
<evidence type="ECO:0000250" key="1"/>
<evidence type="ECO:0000269" key="2">
    <source>
    </source>
</evidence>
<evidence type="ECO:0000269" key="3">
    <source>
    </source>
</evidence>
<evidence type="ECO:0000269" key="4">
    <source>
    </source>
</evidence>
<evidence type="ECO:0000269" key="5">
    <source>
    </source>
</evidence>
<evidence type="ECO:0000269" key="6">
    <source>
    </source>
</evidence>
<evidence type="ECO:0000269" key="7">
    <source>
    </source>
</evidence>
<evidence type="ECO:0000269" key="8">
    <source>
    </source>
</evidence>
<evidence type="ECO:0000269" key="9">
    <source ref="9"/>
</evidence>
<evidence type="ECO:0000303" key="10">
    <source>
    </source>
</evidence>
<evidence type="ECO:0000305" key="11"/>
<evidence type="ECO:0000312" key="12">
    <source>
        <dbReference type="HGNC" id="HGNC:15561"/>
    </source>
</evidence>
<evidence type="ECO:0007829" key="13">
    <source>
        <dbReference type="PDB" id="4P0J"/>
    </source>
</evidence>
<evidence type="ECO:0007829" key="14">
    <source>
        <dbReference type="PDB" id="4P0L"/>
    </source>
</evidence>